<keyword id="KW-0014">AIDS</keyword>
<keyword id="KW-0053">Apoptosis</keyword>
<keyword id="KW-1165">Clathrin-mediated endocytosis of virus by host</keyword>
<keyword id="KW-0165">Cleavage on pair of basic residues</keyword>
<keyword id="KW-0175">Coiled coil</keyword>
<keyword id="KW-1015">Disulfide bond</keyword>
<keyword id="KW-1170">Fusion of virus membrane with host endosomal membrane</keyword>
<keyword id="KW-1168">Fusion of virus membrane with host membrane</keyword>
<keyword id="KW-0325">Glycoprotein</keyword>
<keyword id="KW-1032">Host cell membrane</keyword>
<keyword id="KW-1039">Host endosome</keyword>
<keyword id="KW-1043">Host membrane</keyword>
<keyword id="KW-0945">Host-virus interaction</keyword>
<keyword id="KW-0449">Lipoprotein</keyword>
<keyword id="KW-0472">Membrane</keyword>
<keyword id="KW-0564">Palmitate</keyword>
<keyword id="KW-0732">Signal</keyword>
<keyword id="KW-0812">Transmembrane</keyword>
<keyword id="KW-1133">Transmembrane helix</keyword>
<keyword id="KW-1161">Viral attachment to host cell</keyword>
<keyword id="KW-0261">Viral envelope protein</keyword>
<keyword id="KW-0899">Viral immunoevasion</keyword>
<keyword id="KW-1162">Viral penetration into host cytoplasm</keyword>
<keyword id="KW-0946">Virion</keyword>
<keyword id="KW-1164">Virus endocytosis by host</keyword>
<keyword id="KW-1160">Virus entry into host cell</keyword>
<gene>
    <name evidence="1" type="primary">env</name>
</gene>
<feature type="signal peptide" evidence="1">
    <location>
        <begin position="1"/>
        <end position="21"/>
    </location>
</feature>
<feature type="chain" id="PRO_0000244696" description="Envelope glycoprotein gp160" evidence="1">
    <location>
        <begin position="22"/>
        <end position="836"/>
    </location>
</feature>
<feature type="chain" id="PRO_0000244697" description="Surface protein gp120" evidence="1">
    <location>
        <begin position="22"/>
        <end position="481"/>
    </location>
</feature>
<feature type="chain" id="PRO_0000244698" description="Transmembrane protein gp41" evidence="1">
    <location>
        <begin position="482"/>
        <end position="836"/>
    </location>
</feature>
<feature type="topological domain" description="Extracellular" evidence="1">
    <location>
        <begin position="22"/>
        <end position="656"/>
    </location>
</feature>
<feature type="transmembrane region" description="Helical" evidence="1">
    <location>
        <begin position="657"/>
        <end position="677"/>
    </location>
</feature>
<feature type="topological domain" description="Cytoplasmic" evidence="1">
    <location>
        <begin position="678"/>
        <end position="836"/>
    </location>
</feature>
<feature type="region of interest" description="V1" evidence="1">
    <location>
        <begin position="120"/>
        <end position="146"/>
    </location>
</feature>
<feature type="region of interest" description="V2" evidence="1">
    <location>
        <begin position="147"/>
        <end position="188"/>
    </location>
</feature>
<feature type="region of interest" description="V3" evidence="1">
    <location>
        <begin position="283"/>
        <end position="316"/>
    </location>
</feature>
<feature type="region of interest" description="CD4-binding loop" evidence="1">
    <location>
        <begin position="349"/>
        <end position="359"/>
    </location>
</feature>
<feature type="region of interest" description="V4" evidence="1">
    <location>
        <begin position="370"/>
        <end position="391"/>
    </location>
</feature>
<feature type="region of interest" description="V5" evidence="1">
    <location>
        <begin position="434"/>
        <end position="441"/>
    </location>
</feature>
<feature type="region of interest" description="Fusion peptide" evidence="1">
    <location>
        <begin position="482"/>
        <end position="503"/>
    </location>
</feature>
<feature type="region of interest" description="Immunosuppression" evidence="1">
    <location>
        <begin position="545"/>
        <end position="563"/>
    </location>
</feature>
<feature type="region of interest" description="MPER; binding to GalCer" evidence="1">
    <location>
        <begin position="634"/>
        <end position="655"/>
    </location>
</feature>
<feature type="region of interest" description="Disordered" evidence="2">
    <location>
        <begin position="696"/>
        <end position="715"/>
    </location>
</feature>
<feature type="coiled-coil region" evidence="1">
    <location>
        <begin position="605"/>
        <end position="639"/>
    </location>
</feature>
<feature type="short sequence motif" description="YXXL motif; contains endocytosis signal" evidence="1">
    <location>
        <begin position="684"/>
        <end position="687"/>
    </location>
</feature>
<feature type="short sequence motif" description="Di-leucine internalization motif" evidence="1">
    <location>
        <begin position="835"/>
        <end position="836"/>
    </location>
</feature>
<feature type="site" description="Cleavage; by host furin" evidence="1">
    <location>
        <begin position="481"/>
        <end position="482"/>
    </location>
</feature>
<feature type="glycosylation site" description="N-linked (GlcNAc...) asparagine; by host" evidence="1">
    <location>
        <position position="77"/>
    </location>
</feature>
<feature type="glycosylation site" description="N-linked (GlcNAc...) asparagine; by host" evidence="1">
    <location>
        <position position="121"/>
    </location>
</feature>
<feature type="glycosylation site" description="N-linked (GlcNAc...) asparagine; by host" evidence="1">
    <location>
        <position position="130"/>
    </location>
</feature>
<feature type="glycosylation site" description="N-linked (GlcNAc...) asparagine; by host" evidence="1">
    <location>
        <position position="134"/>
    </location>
</feature>
<feature type="glycosylation site" description="N-linked (GlcNAc...) asparagine; by host" evidence="1">
    <location>
        <position position="146"/>
    </location>
</feature>
<feature type="glycosylation site" description="N-linked (GlcNAc...) asparagine; by host" evidence="1">
    <location>
        <position position="150"/>
    </location>
</feature>
<feature type="glycosylation site" description="N-linked (GlcNAc...) asparagine; by host" evidence="1">
    <location>
        <position position="180"/>
    </location>
</feature>
<feature type="glycosylation site" description="N-linked (GlcNAc...) asparagine; by host" evidence="1">
    <location>
        <position position="189"/>
    </location>
</feature>
<feature type="glycosylation site" description="N-linked (GlcNAc...) asparagine; by host" evidence="1">
    <location>
        <position position="224"/>
    </location>
</feature>
<feature type="glycosylation site" description="N-linked (GlcNAc...) asparagine; by host" evidence="1">
    <location>
        <position position="228"/>
    </location>
</feature>
<feature type="glycosylation site" description="N-linked (GlcNAc...) asparagine; by host" evidence="1">
    <location>
        <position position="233"/>
    </location>
</feature>
<feature type="glycosylation site" description="N-linked (GlcNAc...) asparagine; by host" evidence="1">
    <location>
        <position position="254"/>
    </location>
</feature>
<feature type="glycosylation site" description="N-linked (GlcNAc...) asparagine; by host" evidence="1">
    <location>
        <position position="276"/>
    </location>
</feature>
<feature type="glycosylation site" description="N-linked (GlcNAc...) asparagine; by host" evidence="1">
    <location>
        <position position="282"/>
    </location>
</feature>
<feature type="glycosylation site" description="N-linked (GlcNAc...) asparagine; by host" evidence="1">
    <location>
        <position position="288"/>
    </location>
</feature>
<feature type="glycosylation site" description="N-linked (GlcNAc...) asparagine; by host" evidence="1">
    <location>
        <position position="318"/>
    </location>
</feature>
<feature type="glycosylation site" description="N-linked (GlcNAc...) asparagine; by host" evidence="1">
    <location>
        <position position="328"/>
    </location>
</feature>
<feature type="glycosylation site" description="N-linked (GlcNAc...) asparagine; by host" evidence="1">
    <location>
        <position position="340"/>
    </location>
</feature>
<feature type="glycosylation site" description="N-linked (GlcNAc...) asparagine; by host" evidence="1">
    <location>
        <position position="341"/>
    </location>
</feature>
<feature type="glycosylation site" description="N-linked (GlcNAc...) asparagine; by host" evidence="1">
    <location>
        <position position="371"/>
    </location>
</feature>
<feature type="glycosylation site" description="N-linked (GlcNAc...) asparagine; by host" evidence="1">
    <location>
        <position position="377"/>
    </location>
</feature>
<feature type="glycosylation site" description="N-linked (GlcNAc...) asparagine; by host" evidence="1">
    <location>
        <position position="381"/>
    </location>
</feature>
<feature type="glycosylation site" description="N-linked (GlcNAc...) asparagine; by host" evidence="1">
    <location>
        <position position="384"/>
    </location>
</feature>
<feature type="glycosylation site" description="N-linked (GlcNAc...) asparagine; by host" evidence="1">
    <location>
        <position position="415"/>
    </location>
</feature>
<feature type="glycosylation site" description="N-linked (GlcNAc...) asparagine; by host" evidence="1">
    <location>
        <position position="435"/>
    </location>
</feature>
<feature type="glycosylation site" description="N-linked (GlcNAc...) asparagine; by host" evidence="1">
    <location>
        <position position="582"/>
    </location>
</feature>
<feature type="glycosylation site" description="N-linked (GlcNAc...) asparagine; by host" evidence="1">
    <location>
        <position position="588"/>
    </location>
</feature>
<feature type="glycosylation site" description="N-linked (GlcNAc...) asparagine; by host" evidence="1">
    <location>
        <position position="597"/>
    </location>
</feature>
<feature type="glycosylation site" description="N-linked (GlcNAc...) asparagine; by host" evidence="1">
    <location>
        <position position="609"/>
    </location>
</feature>
<feature type="disulfide bond" evidence="1">
    <location>
        <begin position="43"/>
        <end position="63"/>
    </location>
</feature>
<feature type="disulfide bond" evidence="1">
    <location>
        <begin position="108"/>
        <end position="197"/>
    </location>
</feature>
<feature type="disulfide bond" evidence="1">
    <location>
        <begin position="115"/>
        <end position="188"/>
    </location>
</feature>
<feature type="disulfide bond" evidence="1">
    <location>
        <begin position="120"/>
        <end position="147"/>
    </location>
</feature>
<feature type="disulfide bond" evidence="1">
    <location>
        <begin position="210"/>
        <end position="239"/>
    </location>
</feature>
<feature type="disulfide bond" evidence="1">
    <location>
        <begin position="220"/>
        <end position="231"/>
    </location>
</feature>
<feature type="disulfide bond" evidence="1">
    <location>
        <begin position="283"/>
        <end position="317"/>
    </location>
</feature>
<feature type="disulfide bond" evidence="1">
    <location>
        <begin position="363"/>
        <end position="418"/>
    </location>
</feature>
<feature type="disulfide bond" evidence="1">
    <location>
        <begin position="370"/>
        <end position="391"/>
    </location>
</feature>
<feature type="disulfide bond" evidence="1">
    <location>
        <begin position="569"/>
        <end position="575"/>
    </location>
</feature>
<evidence type="ECO:0000255" key="1">
    <source>
        <dbReference type="HAMAP-Rule" id="MF_04083"/>
    </source>
</evidence>
<evidence type="ECO:0000256" key="2">
    <source>
        <dbReference type="SAM" id="MobiDB-lite"/>
    </source>
</evidence>
<comment type="function">
    <molecule>Envelope glycoprotein gp160</molecule>
    <text evidence="1">Oligomerizes in the host endoplasmic reticulum into predominantly trimers. In a second time, gp160 transits in the host Golgi, where glycosylation is completed. The precursor is then proteolytically cleaved in the trans-Golgi and thereby activated by cellular furin or furin-like proteases to produce gp120 and gp41.</text>
</comment>
<comment type="function">
    <molecule>Surface protein gp120</molecule>
    <text evidence="1">Attaches the virus to the host lymphoid cell by binding to the primary receptor CD4. This interaction induces a structural rearrangement creating a high affinity binding site for a chemokine coreceptor like CXCR4 and/or CCR5. Acts as a ligand for CD209/DC-SIGN and CLEC4M/DC-SIGNR, which are respectively found on dendritic cells (DCs), and on endothelial cells of liver sinusoids and lymph node sinuses. These interactions allow capture of viral particles at mucosal surfaces by these cells and subsequent transmission to permissive cells. HIV subverts the migration properties of dendritic cells to gain access to CD4+ T-cells in lymph nodes. Virus transmission to permissive T-cells occurs either in trans (without DCs infection, through viral capture and transmission), or in cis (following DCs productive infection, through the usual CD4-gp120 interaction), thereby inducing a robust infection. In trans infection, bound virions remain infectious over days and it is proposed that they are not degraded, but protected in non-lysosomal acidic organelles within the DCs close to the cell membrane thus contributing to the viral infectious potential during DCs' migration from the periphery to the lymphoid tissues. On arrival at lymphoid tissues, intact virions recycle back to DCs' cell surface allowing virus transmission to CD4+ T-cells.</text>
</comment>
<comment type="function">
    <molecule>Transmembrane protein gp41</molecule>
    <text evidence="1">Acts as a class I viral fusion protein. Under the current model, the protein has at least 3 conformational states: pre-fusion native state, pre-hairpin intermediate state, and post-fusion hairpin state. During fusion of viral and target intracellular membranes, the coiled coil regions (heptad repeats) assume a trimer-of-hairpins structure, positioning the fusion peptide in close proximity to the C-terminal region of the ectodomain. The formation of this structure appears to drive apposition and subsequent fusion of viral and target cell membranes. Complete fusion occurs in host cell endosomes and is dynamin-dependent, however some lipid transfer might occur at the plasma membrane. The virus undergoes clathrin-dependent internalization long before endosomal fusion, thus minimizing the surface exposure of conserved viral epitopes during fusion and reducing the efficacy of inhibitors targeting these epitopes. Membranes fusion leads to delivery of the nucleocapsid into the cytoplasm.</text>
</comment>
<comment type="subunit">
    <molecule>Surface protein gp120</molecule>
    <text evidence="1">The mature envelope protein (Env) consists of a homotrimer of non-covalently associated gp120-gp41 heterodimers. The resulting complex protrudes from the virus surface as a spike. There seems to be as few as 10 spikes on the average virion. Interacts with host CD4, CCR5 and CXCR4. Gp120 also interacts with the C-type lectins CD209/DC-SIGN and CLEC4M/DC-SIGNR (collectively referred to as DC-SIGN(R)). Gp120 and gp41 interact with GalCer. Gp120 interacts with host ITGA4/ITGB7 complex; on CD4+ T-cells, this interaction results in rapid activation of integrin ITGAL/LFA-1, which facilitates efficient cell-to-cell spreading of HIV-1. Gp120 interacts with cell-associated heparan sulfate; this interaction increases virus infectivity on permissive cells and may be involved in infection of CD4- cells.</text>
</comment>
<comment type="subunit">
    <molecule>Transmembrane protein gp41</molecule>
    <text evidence="1">The mature envelope protein (Env) consists of a homotrimer of non-covalently associated gp120-gp41 heterodimers. The resulting complex protrudes from the virus surface as a spike. There seems to be as few as 10 spikes on the average virion.</text>
</comment>
<comment type="subcellular location">
    <molecule>Surface protein gp120</molecule>
    <subcellularLocation>
        <location evidence="1">Virion membrane</location>
        <topology evidence="1">Peripheral membrane protein</topology>
    </subcellularLocation>
    <subcellularLocation>
        <location evidence="1">Host cell membrane</location>
        <topology evidence="1">Peripheral membrane protein</topology>
    </subcellularLocation>
    <subcellularLocation>
        <location evidence="1">Host endosome membrane</location>
        <topology evidence="1">Single-pass type I membrane protein</topology>
    </subcellularLocation>
    <text evidence="1">The surface protein is not anchored to the viral envelope, but associates with the extravirion surface through its binding to TM. It is probably concentrated at the site of budding and incorporated into the virions possibly by contacts between the cytoplasmic tail of Env and the N-terminus of Gag.</text>
</comment>
<comment type="subcellular location">
    <molecule>Transmembrane protein gp41</molecule>
    <subcellularLocation>
        <location evidence="1">Virion membrane</location>
        <topology evidence="1">Single-pass type I membrane protein</topology>
    </subcellularLocation>
    <subcellularLocation>
        <location evidence="1">Host cell membrane</location>
        <topology evidence="1">Single-pass type I membrane protein</topology>
    </subcellularLocation>
    <subcellularLocation>
        <location evidence="1">Host endosome membrane</location>
        <topology evidence="1">Single-pass type I membrane protein</topology>
    </subcellularLocation>
    <text evidence="1">It is probably concentrated at the site of budding and incorporated into the virions possibly by contacts between the cytoplasmic tail of Env and the N-terminus of Gag.</text>
</comment>
<comment type="domain">
    <text evidence="1">Some of the most genetically diverse regions of the viral genome are present in Env. They are called variable regions 1 through 5 (V1 through V5). Coreceptor usage of gp120 is determined mainly by the primary structure of the third variable region (V3) in the outer domain of gp120. The sequence of V3 determines which coreceptor, CCR5 and/or CXCR4 (corresponding to R5/macrophage, X4/T cell and R5X4/T cell and macrophage tropism), is used to trigger the fusion potential of the Env complex, and hence which cells the virus can infect. Binding to CCR5 involves a region adjacent in addition to V3.</text>
</comment>
<comment type="domain">
    <text evidence="1">The membrane proximal external region (MPER) present in gp41 is a tryptophan-rich region recognized by the antibodies 2F5, Z13, and 4E10. MPER seems to play a role in fusion.</text>
</comment>
<comment type="domain">
    <text evidence="1">The 17 amino acids long immunosuppressive region is present in many retroviral envelope proteins. Synthetic peptides derived from this relatively conserved sequence inhibit immune function in vitro and in vivo.</text>
</comment>
<comment type="domain">
    <text evidence="1">The YXXL motif is involved in determining the exact site of viral release at the surface of infected mononuclear cells and promotes endocytosis. YXXL and di-leucine endocytosis motifs interact directly or indirectly with the clathrin adapter complexes, opperate independently, and their activities are not additive.</text>
</comment>
<comment type="domain">
    <text evidence="1">The CD4-binding region is targeted by the antibody b12.</text>
</comment>
<comment type="PTM">
    <text evidence="1">Highly glycosylated by host. The high number of glycan on the protein is reffered to as 'glycan shield' because it contributes to hide protein sequence from adaptive immune system.</text>
</comment>
<comment type="PTM">
    <text evidence="1">Palmitoylation of the transmembrane protein and of Env polyprotein (prior to its proteolytic cleavage) is essential for their association with host cell membrane lipid rafts. Palmitoylation is therefore required for envelope trafficking to classical lipid rafts, but not for viral replication.</text>
</comment>
<comment type="PTM">
    <text evidence="1">Specific enzymatic cleavages in vivo yield mature proteins. Envelope glycoproteins are synthesized as an inactive precursor that is heavily N-glycosylated and processed likely by host cell furin in the Golgi to yield the mature SU and TM proteins. The cleavage site between SU and TM requires the minimal sequence [KR]-X-[KR]-R. About 2 of the 9 disulfide bonds of gp41 are reduced by P4HB/PDI, following binding to CD4 receptor.</text>
</comment>
<comment type="miscellaneous">
    <text evidence="1">Inhibitors targeting HIV-1 viral envelope proteins are used as antiretroviral drugs. Attachment of virions to the cell surface via non-specific interactions and CD4 binding can be blocked by inhibitors that include cyanovirin-N, cyclotriazadisulfonamide analogs, PRO 2000, TNX 355 and PRO 542. In addition, BMS 806 can block CD4-induced conformational changes. Env interactions with the coreceptor molecules can be targeted by CCR5 antagonists including SCH-D, maraviroc (UK 427857) and aplaviroc (GW 873140), and the CXCR4 antagonist AMD 070. Fusion of viral and cellular membranes can be inhibited by peptides such as enfuvirtide and tifuvirtide (T 1249). Resistance to inhibitors associated with mutations in Env are observed. Most of the time, single mutations confer only a modest reduction in drug susceptibility. Combination of several mutations is usually required to develop a high-level drug resistance.</text>
</comment>
<comment type="miscellaneous">
    <text evidence="1">HIV-1 lineages are divided in three main groups, M (for Major), O (for Outlier), and N (for New, or Non-M, Non-O). The vast majority of strains found worldwide belong to the group M. Group O seems to be endemic to and largely confined to Cameroon and neighboring countries in West Central Africa, where these viruses represent a small minority of HIV-1 strains. The group N is represented by a limited number of isolates from Cameroonian persons. The group M is further subdivided in 9 clades or subtypes (A to D, F to H, J and K).</text>
</comment>
<comment type="similarity">
    <text evidence="1">Belongs to the HIV-1 env protein family.</text>
</comment>
<comment type="online information" name="hivdb">
    <link uri="https://hivdb.stanford.edu"/>
    <text>HIV drug resistance database</text>
</comment>
<comment type="online information" name="HIV drug resistance mutations">
    <link uri="https://www.iasusa.org/hiv-drug-resistance/hiv-drug-resistance-mutations/"/>
</comment>
<organism>
    <name type="scientific">Human immunodeficiency virus type 1 group N (isolate YBF106)</name>
    <name type="common">HIV-1</name>
    <dbReference type="NCBI Taxonomy" id="388819"/>
    <lineage>
        <taxon>Viruses</taxon>
        <taxon>Riboviria</taxon>
        <taxon>Pararnavirae</taxon>
        <taxon>Artverviricota</taxon>
        <taxon>Revtraviricetes</taxon>
        <taxon>Ortervirales</taxon>
        <taxon>Retroviridae</taxon>
        <taxon>Orthoretrovirinae</taxon>
        <taxon>Lentivirus</taxon>
        <taxon>Human immunodeficiency virus type 1</taxon>
    </lineage>
</organism>
<dbReference type="EMBL" id="AJ271370">
    <property type="protein sequence ID" value="CAB96345.1"/>
    <property type="molecule type" value="Genomic_DNA"/>
</dbReference>
<dbReference type="GlyCosmos" id="Q9IDV2">
    <property type="glycosylation" value="29 sites, No reported glycans"/>
</dbReference>
<dbReference type="Proteomes" id="UP000007714">
    <property type="component" value="Segment"/>
</dbReference>
<dbReference type="GO" id="GO:0044175">
    <property type="term" value="C:host cell endosome membrane"/>
    <property type="evidence" value="ECO:0007669"/>
    <property type="project" value="UniProtKB-SubCell"/>
</dbReference>
<dbReference type="GO" id="GO:0020002">
    <property type="term" value="C:host cell plasma membrane"/>
    <property type="evidence" value="ECO:0007669"/>
    <property type="project" value="UniProtKB-SubCell"/>
</dbReference>
<dbReference type="GO" id="GO:0016020">
    <property type="term" value="C:membrane"/>
    <property type="evidence" value="ECO:0007669"/>
    <property type="project" value="UniProtKB-UniRule"/>
</dbReference>
<dbReference type="GO" id="GO:0019031">
    <property type="term" value="C:viral envelope"/>
    <property type="evidence" value="ECO:0007669"/>
    <property type="project" value="UniProtKB-KW"/>
</dbReference>
<dbReference type="GO" id="GO:0055036">
    <property type="term" value="C:virion membrane"/>
    <property type="evidence" value="ECO:0007669"/>
    <property type="project" value="UniProtKB-SubCell"/>
</dbReference>
<dbReference type="GO" id="GO:0005198">
    <property type="term" value="F:structural molecule activity"/>
    <property type="evidence" value="ECO:0007669"/>
    <property type="project" value="UniProtKB-UniRule"/>
</dbReference>
<dbReference type="GO" id="GO:0075512">
    <property type="term" value="P:clathrin-dependent endocytosis of virus by host cell"/>
    <property type="evidence" value="ECO:0007669"/>
    <property type="project" value="UniProtKB-UniRule"/>
</dbReference>
<dbReference type="GO" id="GO:0039654">
    <property type="term" value="P:fusion of virus membrane with host endosome membrane"/>
    <property type="evidence" value="ECO:0007669"/>
    <property type="project" value="UniProtKB-UniRule"/>
</dbReference>
<dbReference type="GO" id="GO:0019064">
    <property type="term" value="P:fusion of virus membrane with host plasma membrane"/>
    <property type="evidence" value="ECO:0007669"/>
    <property type="project" value="UniProtKB-UniRule"/>
</dbReference>
<dbReference type="GO" id="GO:1903908">
    <property type="term" value="P:positive regulation of plasma membrane raft polarization"/>
    <property type="evidence" value="ECO:0007669"/>
    <property type="project" value="UniProtKB-UniRule"/>
</dbReference>
<dbReference type="GO" id="GO:1903911">
    <property type="term" value="P:positive regulation of receptor clustering"/>
    <property type="evidence" value="ECO:0007669"/>
    <property type="project" value="UniProtKB-UniRule"/>
</dbReference>
<dbReference type="GO" id="GO:0019082">
    <property type="term" value="P:viral protein processing"/>
    <property type="evidence" value="ECO:0007669"/>
    <property type="project" value="UniProtKB-UniRule"/>
</dbReference>
<dbReference type="GO" id="GO:0019062">
    <property type="term" value="P:virion attachment to host cell"/>
    <property type="evidence" value="ECO:0007669"/>
    <property type="project" value="UniProtKB-UniRule"/>
</dbReference>
<dbReference type="CDD" id="cd09909">
    <property type="entry name" value="HIV-1-like_HR1-HR2"/>
    <property type="match status" value="1"/>
</dbReference>
<dbReference type="FunFam" id="1.10.287.210:FF:000001">
    <property type="entry name" value="Envelope glycoprotein gp160"/>
    <property type="match status" value="1"/>
</dbReference>
<dbReference type="FunFam" id="1.20.5.490:FF:000001">
    <property type="entry name" value="Envelope glycoprotein gp160"/>
    <property type="match status" value="1"/>
</dbReference>
<dbReference type="FunFam" id="2.170.40.20:FF:000004">
    <property type="entry name" value="Envelope glycoprotein gp160"/>
    <property type="match status" value="1"/>
</dbReference>
<dbReference type="Gene3D" id="1.10.287.210">
    <property type="match status" value="1"/>
</dbReference>
<dbReference type="Gene3D" id="2.170.40.20">
    <property type="entry name" value="Human immunodeficiency virus 1, Gp160, envelope glycoprotein"/>
    <property type="match status" value="2"/>
</dbReference>
<dbReference type="Gene3D" id="1.20.5.490">
    <property type="entry name" value="Single helix bin"/>
    <property type="match status" value="1"/>
</dbReference>
<dbReference type="HAMAP" id="MF_04083">
    <property type="entry name" value="HIV_ENV"/>
    <property type="match status" value="1"/>
</dbReference>
<dbReference type="InterPro" id="IPR036377">
    <property type="entry name" value="Gp120_core_sf"/>
</dbReference>
<dbReference type="InterPro" id="IPR037527">
    <property type="entry name" value="Gp160"/>
</dbReference>
<dbReference type="InterPro" id="IPR000328">
    <property type="entry name" value="GP41-like"/>
</dbReference>
<dbReference type="InterPro" id="IPR000777">
    <property type="entry name" value="HIV1_Gp120"/>
</dbReference>
<dbReference type="Pfam" id="PF00516">
    <property type="entry name" value="GP120"/>
    <property type="match status" value="1"/>
</dbReference>
<dbReference type="Pfam" id="PF00517">
    <property type="entry name" value="GP41"/>
    <property type="match status" value="1"/>
</dbReference>
<dbReference type="SUPFAM" id="SSF56502">
    <property type="entry name" value="gp120 core"/>
    <property type="match status" value="2"/>
</dbReference>
<dbReference type="SUPFAM" id="SSF58069">
    <property type="entry name" value="Virus ectodomain"/>
    <property type="match status" value="1"/>
</dbReference>
<organismHost>
    <name type="scientific">Homo sapiens</name>
    <name type="common">Human</name>
    <dbReference type="NCBI Taxonomy" id="9606"/>
</organismHost>
<name>ENV_HV1YB</name>
<reference key="1">
    <citation type="journal article" date="2004" name="AIDS">
        <title>Phylogenetic characteristics of three new HIV-1 N strains and implications for the origin of group N.</title>
        <authorList>
            <person name="Roques P."/>
            <person name="Robertson D.L."/>
            <person name="Souquiere S."/>
            <person name="Apetrei C."/>
            <person name="Nerrienet E."/>
            <person name="Barre-Sinoussi F."/>
            <person name="Muller-Trutwin M."/>
            <person name="Simon F."/>
        </authorList>
    </citation>
    <scope>NUCLEOTIDE SEQUENCE [GENOMIC DNA]</scope>
</reference>
<reference key="2">
    <citation type="journal article" date="2003" name="APMIS">
        <title>Pathogens target DC-SIGN to influence their fate DC-SIGN functions as a pathogen receptor with broad specificity.</title>
        <authorList>
            <person name="Geijtenbeek T.B."/>
            <person name="van Kooyk Y."/>
        </authorList>
    </citation>
    <scope>REVIEW</scope>
</reference>
<reference key="3">
    <citation type="journal article" date="2003" name="Biochim. Biophys. Acta">
        <title>The HIV Env-mediated fusion reaction.</title>
        <authorList>
            <person name="Gallo S.A."/>
            <person name="Finnegan C.M."/>
            <person name="Viard M."/>
            <person name="Raviv Y."/>
            <person name="Dimitrov A."/>
            <person name="Rawat S.S."/>
            <person name="Puri A."/>
            <person name="Durell S."/>
            <person name="Blumenthal R."/>
        </authorList>
    </citation>
    <scope>REVIEW</scope>
</reference>
<reference key="4">
    <citation type="journal article" date="2005" name="Cell Death Differ.">
        <title>Mechanisms of apoptosis induction by the HIV-1 envelope.</title>
        <authorList>
            <person name="Perfettini J.-L."/>
            <person name="Castedo M."/>
            <person name="Roumier T."/>
            <person name="Andreau K."/>
            <person name="Nardacci R."/>
            <person name="Piacentini M."/>
            <person name="Kroemer G."/>
        </authorList>
    </citation>
    <scope>REVIEW</scope>
</reference>
<reference key="5">
    <citation type="journal article" date="2005" name="AIDS Res. Hum. Retroviruses">
        <title>V3: HIV's switch-hitter.</title>
        <authorList>
            <person name="Hartley O."/>
            <person name="Klasse P.J."/>
            <person name="Sattentau Q.J."/>
            <person name="Moore J.P."/>
        </authorList>
    </citation>
    <scope>REVIEW</scope>
</reference>
<reference key="6">
    <citation type="journal article" date="2005" name="Drugs">
        <title>Emerging drug targets for antiretroviral therapy.</title>
        <authorList>
            <person name="Reeves J.D."/>
            <person name="Piefer A.J."/>
        </authorList>
    </citation>
    <scope>REVIEW</scope>
</reference>
<reference key="7">
    <citation type="journal article" date="2006" name="EMBO J.">
        <title>HIV and the chemokine system: 10 years later.</title>
        <authorList>
            <person name="Lusso P."/>
        </authorList>
    </citation>
    <scope>REVIEW</scope>
</reference>
<accession>Q9IDV2</accession>
<sequence>MGMQSGWPFFCLLISLTIGSDPHWVTVYYGVPVWRDAETVLFCASDAKAHSTEAHNIWATQACVPTDPNPQEVLLTNVTEYFNMWENKMAEQMQEDIISLWEQSLKPCVKLTPLCVTMLCNNSNGNSAGNSTTNRTEDLEDRQMKNCSFNITTEIRDRKKQVYSLFYVEDVVPIKDGTDNNTYRLINCNTTAVTQACPKTTFEPIPIHYCAPPGFAIMKCNEGNFSGNGSCTNVSTVQCTHGIKPVISTQLILNGSLDTDDIVIRHHGGNLLVQWNETVSINCTRPGNNTGGQVQIGPAMTFYNIEKIVGDVRQAYCNVSEEWGSMWNKTKKKIKRLLGNNTTFKAQDKNGGDLEVTHLMFNCXGEFFYCNTSRLFNESENKTNKTIILPCRIKQIVBLWTRVXKGIYAPPIRGNLSCXSSITGLILEHSGENGNKTVYPSGGNMVNLWRQELYKYKVVSIEPIGVAPGKAKRRTVSREKRAAFGLGALFLGFLGAAGSTMGAASITLTVQARTLLSGIVQQQNNLLRAIEAQQHLLQLSIWGIKQLRAKVLAIERYLRDQQILSLWGCSGKTICYTTVPWNDTWSSNTSYDTIWXNLTWQQWDRKVRNYSGVIFDLIEQAQEQQNTNEKALLELDQWASLWNWFDITKWLWYIKIAIMVVAGIIGIRIISAIITIIARVRQGYSPLSLQTLIPTAARGPDRPEETEEGVGGQDRGRSVRLVSGFLALIWEDLRNLLIFLYHRLADSLLIIRRTLEILGQSLSRGLQLLNELRIRLWGIIAYWGKELKDSAISLLNTTAIVVAEGTDRFIELAQRIGRGILHIPRRIRQGLERALL</sequence>
<proteinExistence type="inferred from homology"/>
<protein>
    <recommendedName>
        <fullName evidence="1">Envelope glycoprotein gp160</fullName>
    </recommendedName>
    <alternativeName>
        <fullName evidence="1">Env polyprotein</fullName>
    </alternativeName>
    <component>
        <recommendedName>
            <fullName evidence="1">Surface protein gp120</fullName>
            <shortName evidence="1">SU</shortName>
        </recommendedName>
        <alternativeName>
            <fullName evidence="1">Glycoprotein 120</fullName>
            <shortName evidence="1">gp120</shortName>
        </alternativeName>
    </component>
    <component>
        <recommendedName>
            <fullName evidence="1">Transmembrane protein gp41</fullName>
            <shortName evidence="1">TM</shortName>
        </recommendedName>
        <alternativeName>
            <fullName evidence="1">Glycoprotein 41</fullName>
            <shortName evidence="1">gp41</shortName>
        </alternativeName>
    </component>
</protein>